<evidence type="ECO:0000255" key="1">
    <source>
        <dbReference type="HAMAP-Rule" id="MF_00075"/>
    </source>
</evidence>
<gene>
    <name evidence="1" type="primary">infA</name>
    <name type="ordered locus">Fnod_1115</name>
</gene>
<dbReference type="EMBL" id="CP000771">
    <property type="protein sequence ID" value="ABS60962.1"/>
    <property type="molecule type" value="Genomic_DNA"/>
</dbReference>
<dbReference type="SMR" id="A7HM29"/>
<dbReference type="STRING" id="381764.Fnod_1115"/>
<dbReference type="KEGG" id="fno:Fnod_1115"/>
<dbReference type="eggNOG" id="COG0361">
    <property type="taxonomic scope" value="Bacteria"/>
</dbReference>
<dbReference type="HOGENOM" id="CLU_151267_0_1_0"/>
<dbReference type="Proteomes" id="UP000002415">
    <property type="component" value="Chromosome"/>
</dbReference>
<dbReference type="GO" id="GO:0005829">
    <property type="term" value="C:cytosol"/>
    <property type="evidence" value="ECO:0007669"/>
    <property type="project" value="TreeGrafter"/>
</dbReference>
<dbReference type="GO" id="GO:0043022">
    <property type="term" value="F:ribosome binding"/>
    <property type="evidence" value="ECO:0007669"/>
    <property type="project" value="UniProtKB-UniRule"/>
</dbReference>
<dbReference type="GO" id="GO:0019843">
    <property type="term" value="F:rRNA binding"/>
    <property type="evidence" value="ECO:0007669"/>
    <property type="project" value="UniProtKB-UniRule"/>
</dbReference>
<dbReference type="GO" id="GO:0003743">
    <property type="term" value="F:translation initiation factor activity"/>
    <property type="evidence" value="ECO:0007669"/>
    <property type="project" value="UniProtKB-UniRule"/>
</dbReference>
<dbReference type="CDD" id="cd04451">
    <property type="entry name" value="S1_IF1"/>
    <property type="match status" value="1"/>
</dbReference>
<dbReference type="FunFam" id="2.40.50.140:FF:000002">
    <property type="entry name" value="Translation initiation factor IF-1"/>
    <property type="match status" value="1"/>
</dbReference>
<dbReference type="Gene3D" id="2.40.50.140">
    <property type="entry name" value="Nucleic acid-binding proteins"/>
    <property type="match status" value="1"/>
</dbReference>
<dbReference type="HAMAP" id="MF_00075">
    <property type="entry name" value="IF_1"/>
    <property type="match status" value="1"/>
</dbReference>
<dbReference type="InterPro" id="IPR012340">
    <property type="entry name" value="NA-bd_OB-fold"/>
</dbReference>
<dbReference type="InterPro" id="IPR006196">
    <property type="entry name" value="RNA-binding_domain_S1_IF1"/>
</dbReference>
<dbReference type="InterPro" id="IPR003029">
    <property type="entry name" value="S1_domain"/>
</dbReference>
<dbReference type="InterPro" id="IPR004368">
    <property type="entry name" value="TIF_IF1"/>
</dbReference>
<dbReference type="NCBIfam" id="TIGR00008">
    <property type="entry name" value="infA"/>
    <property type="match status" value="1"/>
</dbReference>
<dbReference type="PANTHER" id="PTHR33370">
    <property type="entry name" value="TRANSLATION INITIATION FACTOR IF-1, CHLOROPLASTIC"/>
    <property type="match status" value="1"/>
</dbReference>
<dbReference type="PANTHER" id="PTHR33370:SF1">
    <property type="entry name" value="TRANSLATION INITIATION FACTOR IF-1, CHLOROPLASTIC"/>
    <property type="match status" value="1"/>
</dbReference>
<dbReference type="Pfam" id="PF01176">
    <property type="entry name" value="eIF-1a"/>
    <property type="match status" value="1"/>
</dbReference>
<dbReference type="SMART" id="SM00316">
    <property type="entry name" value="S1"/>
    <property type="match status" value="1"/>
</dbReference>
<dbReference type="SUPFAM" id="SSF50249">
    <property type="entry name" value="Nucleic acid-binding proteins"/>
    <property type="match status" value="1"/>
</dbReference>
<dbReference type="PROSITE" id="PS50832">
    <property type="entry name" value="S1_IF1_TYPE"/>
    <property type="match status" value="1"/>
</dbReference>
<organism>
    <name type="scientific">Fervidobacterium nodosum (strain ATCC 35602 / DSM 5306 / Rt17-B1)</name>
    <dbReference type="NCBI Taxonomy" id="381764"/>
    <lineage>
        <taxon>Bacteria</taxon>
        <taxon>Thermotogati</taxon>
        <taxon>Thermotogota</taxon>
        <taxon>Thermotogae</taxon>
        <taxon>Thermotogales</taxon>
        <taxon>Fervidobacteriaceae</taxon>
        <taxon>Fervidobacterium</taxon>
    </lineage>
</organism>
<feature type="chain" id="PRO_0000338824" description="Translation initiation factor IF-1">
    <location>
        <begin position="1"/>
        <end position="90"/>
    </location>
</feature>
<feature type="domain" description="S1-like" evidence="1">
    <location>
        <begin position="7"/>
        <end position="76"/>
    </location>
</feature>
<comment type="function">
    <text evidence="1">One of the essential components for the initiation of protein synthesis. Stabilizes the binding of IF-2 and IF-3 on the 30S subunit to which N-formylmethionyl-tRNA(fMet) subsequently binds. Helps modulate mRNA selection, yielding the 30S pre-initiation complex (PIC). Upon addition of the 50S ribosomal subunit IF-1, IF-2 and IF-3 are released leaving the mature 70S translation initiation complex.</text>
</comment>
<comment type="subunit">
    <text evidence="1">Component of the 30S ribosomal translation pre-initiation complex which assembles on the 30S ribosome in the order IF-2 and IF-3, IF-1 and N-formylmethionyl-tRNA(fMet); mRNA recruitment can occur at any time during PIC assembly.</text>
</comment>
<comment type="subcellular location">
    <subcellularLocation>
        <location evidence="1">Cytoplasm</location>
    </subcellularLocation>
</comment>
<comment type="similarity">
    <text evidence="1">Belongs to the IF-1 family.</text>
</comment>
<reference key="1">
    <citation type="submission" date="2007-07" db="EMBL/GenBank/DDBJ databases">
        <title>Complete sequence of Fervidobacterium nodosum Rt17-B1.</title>
        <authorList>
            <consortium name="US DOE Joint Genome Institute"/>
            <person name="Copeland A."/>
            <person name="Lucas S."/>
            <person name="Lapidus A."/>
            <person name="Barry K."/>
            <person name="Glavina del Rio T."/>
            <person name="Dalin E."/>
            <person name="Tice H."/>
            <person name="Pitluck S."/>
            <person name="Saunders E."/>
            <person name="Brettin T."/>
            <person name="Bruce D."/>
            <person name="Detter J.C."/>
            <person name="Han C."/>
            <person name="Schmutz J."/>
            <person name="Larimer F."/>
            <person name="Land M."/>
            <person name="Hauser L."/>
            <person name="Kyrpides N."/>
            <person name="Mikhailova N."/>
            <person name="Nelson K."/>
            <person name="Gogarten J.P."/>
            <person name="Noll K."/>
            <person name="Richardson P."/>
        </authorList>
    </citation>
    <scope>NUCLEOTIDE SEQUENCE [LARGE SCALE GENOMIC DNA]</scope>
    <source>
        <strain>ATCC 35602 / DSM 5306 / Rt17-B1</strain>
    </source>
</reference>
<name>IF1_FERNB</name>
<accession>A7HM29</accession>
<keyword id="KW-0963">Cytoplasm</keyword>
<keyword id="KW-0396">Initiation factor</keyword>
<keyword id="KW-0648">Protein biosynthesis</keyword>
<keyword id="KW-1185">Reference proteome</keyword>
<keyword id="KW-0694">RNA-binding</keyword>
<keyword id="KW-0699">rRNA-binding</keyword>
<protein>
    <recommendedName>
        <fullName evidence="1">Translation initiation factor IF-1</fullName>
    </recommendedName>
</protein>
<sequence>MIYLKNKEDVIRMEGTIVEALPNAMFRVQLDNGFKVLAHVSGKMRKNFIRLVPGDRVVVELTIYDLTRGRIVYRKKLDSKGEEEILDDDE</sequence>
<proteinExistence type="inferred from homology"/>